<protein>
    <recommendedName>
        <fullName>3-oxoadipate CoA-transferase subunit B</fullName>
        <ecNumber>2.8.3.6</ecNumber>
    </recommendedName>
    <alternativeName>
        <fullName>3-oxoadipate:succinyl-CoA transferase subunit B</fullName>
    </alternativeName>
    <alternativeName>
        <fullName>Beta-ketoadipate:succinyl-CoA transferase subunit B</fullName>
    </alternativeName>
</protein>
<name>CATJ_PSEKB</name>
<evidence type="ECO:0000250" key="1"/>
<evidence type="ECO:0000269" key="2">
    <source>
    </source>
</evidence>
<evidence type="ECO:0000305" key="3"/>
<proteinExistence type="evidence at protein level"/>
<organism>
    <name type="scientific">Pseudomonas knackmussii (strain DSM 6978 / CCUG 54928 / LMG 23759 / B13)</name>
    <dbReference type="NCBI Taxonomy" id="1301098"/>
    <lineage>
        <taxon>Bacteria</taxon>
        <taxon>Pseudomonadati</taxon>
        <taxon>Pseudomonadota</taxon>
        <taxon>Gammaproteobacteria</taxon>
        <taxon>Pseudomonadales</taxon>
        <taxon>Pseudomonadaceae</taxon>
        <taxon>Pseudomonas</taxon>
    </lineage>
</organism>
<keyword id="KW-0058">Aromatic hydrocarbons catabolism</keyword>
<keyword id="KW-0903">Direct protein sequencing</keyword>
<keyword id="KW-0808">Transferase</keyword>
<accession>Q8VPF2</accession>
<reference key="1">
    <citation type="journal article" date="2002" name="J. Bacteriol.">
        <title>Degradation of aromatics and chloroaromatics by Pseudomonas sp. strain B13: cloning, characterization, and analysis of sequences encoding 3-oxoadipate:succinyl-coenzyme A (CoA) transferase and 3-oxoadipyl-CoA thiolase.</title>
        <authorList>
            <person name="Goebel M."/>
            <person name="Kassel-Cati K."/>
            <person name="Schmidt E."/>
            <person name="Reineke W."/>
        </authorList>
    </citation>
    <scope>NUCLEOTIDE SEQUENCE [GENOMIC DNA]</scope>
</reference>
<reference key="2">
    <citation type="journal article" date="2002" name="J. Bacteriol.">
        <title>Degradation of aromatics and chloroaromatics by Pseudomonas sp. strain B13: purification and characterization of 3-oxoadipate:succinyl-coenzyme A (CoA) transferase and 3-oxoadipyl-CoA thiolase.</title>
        <authorList>
            <person name="Kaschabek S.R."/>
            <person name="Kuhn B."/>
            <person name="Mueller D."/>
            <person name="Schmidt E."/>
            <person name="Reineke W."/>
        </authorList>
    </citation>
    <scope>PROTEIN SEQUENCE OF 2-26</scope>
    <scope>CATALYTIC ACTIVITY</scope>
    <scope>BIOPHYSICOCHEMICAL PROPERTIES</scope>
    <scope>SUBUNIT</scope>
</reference>
<dbReference type="EC" id="2.8.3.6"/>
<dbReference type="EMBL" id="AY044272">
    <property type="protein sequence ID" value="AAL02406.1"/>
    <property type="molecule type" value="Genomic_DNA"/>
</dbReference>
<dbReference type="RefSeq" id="WP_043252820.1">
    <property type="nucleotide sequence ID" value="NZ_HG322950.1"/>
</dbReference>
<dbReference type="SMR" id="Q8VPF2"/>
<dbReference type="STRING" id="1301098.PKB_2951"/>
<dbReference type="eggNOG" id="COG2057">
    <property type="taxonomic scope" value="Bacteria"/>
</dbReference>
<dbReference type="OrthoDB" id="9813111at2"/>
<dbReference type="BRENDA" id="2.8.3.6">
    <property type="organism ID" value="5180"/>
</dbReference>
<dbReference type="SABIO-RK" id="Q8VPF2"/>
<dbReference type="UniPathway" id="UPA00157">
    <property type="reaction ID" value="UER00262"/>
</dbReference>
<dbReference type="GO" id="GO:0047569">
    <property type="term" value="F:3-oxoadipate CoA-transferase activity"/>
    <property type="evidence" value="ECO:0007669"/>
    <property type="project" value="UniProtKB-EC"/>
</dbReference>
<dbReference type="GO" id="GO:0042952">
    <property type="term" value="P:beta-ketoadipate pathway"/>
    <property type="evidence" value="ECO:0007669"/>
    <property type="project" value="UniProtKB-UniPathway"/>
</dbReference>
<dbReference type="Gene3D" id="3.40.1080.10">
    <property type="entry name" value="Glutaconate Coenzyme A-transferase"/>
    <property type="match status" value="1"/>
</dbReference>
<dbReference type="InterPro" id="IPR004165">
    <property type="entry name" value="CoA_trans_fam_I"/>
</dbReference>
<dbReference type="InterPro" id="IPR037171">
    <property type="entry name" value="NagB/RpiA_transferase-like"/>
</dbReference>
<dbReference type="PANTHER" id="PTHR43293">
    <property type="entry name" value="ACETATE COA-TRANSFERASE YDIF"/>
    <property type="match status" value="1"/>
</dbReference>
<dbReference type="PANTHER" id="PTHR43293:SF3">
    <property type="entry name" value="CHOLESTEROL RING-CLEAVING HYDROLASE IPDB SUBUNIT"/>
    <property type="match status" value="1"/>
</dbReference>
<dbReference type="Pfam" id="PF01144">
    <property type="entry name" value="CoA_trans"/>
    <property type="match status" value="1"/>
</dbReference>
<dbReference type="SMART" id="SM00882">
    <property type="entry name" value="CoA_trans"/>
    <property type="match status" value="1"/>
</dbReference>
<dbReference type="SUPFAM" id="SSF100950">
    <property type="entry name" value="NagB/RpiA/CoA transferase-like"/>
    <property type="match status" value="1"/>
</dbReference>
<gene>
    <name type="primary">catJ</name>
</gene>
<comment type="catalytic activity">
    <reaction evidence="2">
        <text>3-oxoadipate + succinyl-CoA = 3-oxoadipyl-CoA + succinate</text>
        <dbReference type="Rhea" id="RHEA:12048"/>
        <dbReference type="ChEBI" id="CHEBI:15775"/>
        <dbReference type="ChEBI" id="CHEBI:30031"/>
        <dbReference type="ChEBI" id="CHEBI:57292"/>
        <dbReference type="ChEBI" id="CHEBI:57348"/>
        <dbReference type="EC" id="2.8.3.6"/>
    </reaction>
</comment>
<comment type="biophysicochemical properties">
    <kinetics>
        <KM evidence="2">0.4 mM for 3-oxoadipate</KM>
        <KM evidence="2">0.2 mM for succinyl-CoA</KM>
    </kinetics>
    <phDependence>
        <text evidence="2">Optimum pH is 8.4.</text>
    </phDependence>
</comment>
<comment type="pathway">
    <text>Aromatic compound metabolism; beta-ketoadipate pathway; acetyl-CoA and succinyl-CoA from 3-oxoadipate: step 1/2.</text>
</comment>
<comment type="subunit">
    <text evidence="2">Heterotetramer composed of 2 A and 2 B subunits.</text>
</comment>
<comment type="similarity">
    <text evidence="3">Belongs to the 3-oxoacid CoA-transferase subunit B family.</text>
</comment>
<feature type="initiator methionine" description="Removed" evidence="2">
    <location>
        <position position="1"/>
    </location>
</feature>
<feature type="chain" id="PRO_0000337674" description="3-oxoadipate CoA-transferase subunit B">
    <location>
        <begin position="2"/>
        <end position="260"/>
    </location>
</feature>
<feature type="active site" evidence="1">
    <location>
        <position position="51"/>
    </location>
</feature>
<sequence>MSAYSTNEMMTVAAARRLKNGAVCFVGIGLPSKAANLARLTSSPDVVLIYESGPIGAKPTVLPLSIGDGELAETADTVVPTGEIFRYWLQGGRIDVGFLGAAQVDRFGNINTTVIGDYNKPKVRLPGAGGAPEIAGSAKEVLIILKQSHRTFVDKLAFITSVGHGEGGDHRKQLGLPGKGPVAIITDLCIMEPEAGSNEFIVTSLHPGVTREQVIENTGWAIRFAEQVKETAAPTEVELEALRALEARTAAAHGQQGGEE</sequence>